<evidence type="ECO:0000255" key="1">
    <source>
        <dbReference type="HAMAP-Rule" id="MF_00709"/>
    </source>
</evidence>
<accession>A7ZV24</accession>
<protein>
    <recommendedName>
        <fullName evidence="1">Fumarate reductase subunit D</fullName>
    </recommendedName>
    <alternativeName>
        <fullName evidence="1">Fumarate reductase 13 kDa hydrophobic protein</fullName>
    </alternativeName>
    <alternativeName>
        <fullName evidence="1">Quinol-fumarate reductase subunit D</fullName>
        <shortName evidence="1">QFR subunit D</shortName>
    </alternativeName>
</protein>
<proteinExistence type="inferred from homology"/>
<reference key="1">
    <citation type="journal article" date="2008" name="J. Bacteriol.">
        <title>The pangenome structure of Escherichia coli: comparative genomic analysis of E. coli commensal and pathogenic isolates.</title>
        <authorList>
            <person name="Rasko D.A."/>
            <person name="Rosovitz M.J."/>
            <person name="Myers G.S.A."/>
            <person name="Mongodin E.F."/>
            <person name="Fricke W.F."/>
            <person name="Gajer P."/>
            <person name="Crabtree J."/>
            <person name="Sebaihia M."/>
            <person name="Thomson N.R."/>
            <person name="Chaudhuri R."/>
            <person name="Henderson I.R."/>
            <person name="Sperandio V."/>
            <person name="Ravel J."/>
        </authorList>
    </citation>
    <scope>NUCLEOTIDE SEQUENCE [LARGE SCALE GENOMIC DNA]</scope>
    <source>
        <strain>E24377A / ETEC</strain>
    </source>
</reference>
<gene>
    <name evidence="1" type="primary">frdD</name>
    <name type="ordered locus">EcE24377A_4710</name>
</gene>
<dbReference type="EMBL" id="CP000800">
    <property type="protein sequence ID" value="ABV20657.1"/>
    <property type="molecule type" value="Genomic_DNA"/>
</dbReference>
<dbReference type="RefSeq" id="WP_001299198.1">
    <property type="nucleotide sequence ID" value="NC_009801.1"/>
</dbReference>
<dbReference type="SMR" id="A7ZV24"/>
<dbReference type="GeneID" id="93777671"/>
<dbReference type="KEGG" id="ecw:EcE24377A_4710"/>
<dbReference type="HOGENOM" id="CLU_168367_0_0_6"/>
<dbReference type="Proteomes" id="UP000001122">
    <property type="component" value="Chromosome"/>
</dbReference>
<dbReference type="GO" id="GO:0045283">
    <property type="term" value="C:fumarate reductase complex"/>
    <property type="evidence" value="ECO:0007669"/>
    <property type="project" value="UniProtKB-UniRule"/>
</dbReference>
<dbReference type="GO" id="GO:0005886">
    <property type="term" value="C:plasma membrane"/>
    <property type="evidence" value="ECO:0007669"/>
    <property type="project" value="UniProtKB-SubCell"/>
</dbReference>
<dbReference type="GO" id="GO:0000104">
    <property type="term" value="F:succinate dehydrogenase activity"/>
    <property type="evidence" value="ECO:0007669"/>
    <property type="project" value="UniProtKB-UniRule"/>
</dbReference>
<dbReference type="GO" id="GO:0006106">
    <property type="term" value="P:fumarate metabolic process"/>
    <property type="evidence" value="ECO:0007669"/>
    <property type="project" value="InterPro"/>
</dbReference>
<dbReference type="CDD" id="cd00547">
    <property type="entry name" value="QFR_TypeD_subunitD"/>
    <property type="match status" value="1"/>
</dbReference>
<dbReference type="FunFam" id="1.20.1300.10:FF:000002">
    <property type="entry name" value="Fumarate reductase subunit D"/>
    <property type="match status" value="1"/>
</dbReference>
<dbReference type="Gene3D" id="1.20.1300.10">
    <property type="entry name" value="Fumarate reductase/succinate dehydrogenase, transmembrane subunit"/>
    <property type="match status" value="1"/>
</dbReference>
<dbReference type="HAMAP" id="MF_00709">
    <property type="entry name" value="Fumarate_red_D"/>
    <property type="match status" value="1"/>
</dbReference>
<dbReference type="InterPro" id="IPR003418">
    <property type="entry name" value="Fumarate_red_D"/>
</dbReference>
<dbReference type="InterPro" id="IPR034804">
    <property type="entry name" value="SQR/QFR_C/D"/>
</dbReference>
<dbReference type="NCBIfam" id="NF003977">
    <property type="entry name" value="PRK05470.1-1"/>
    <property type="match status" value="1"/>
</dbReference>
<dbReference type="Pfam" id="PF02313">
    <property type="entry name" value="Fumarate_red_D"/>
    <property type="match status" value="1"/>
</dbReference>
<dbReference type="PIRSF" id="PIRSF000179">
    <property type="entry name" value="FrdD"/>
    <property type="match status" value="1"/>
</dbReference>
<dbReference type="SUPFAM" id="SSF81343">
    <property type="entry name" value="Fumarate reductase respiratory complex transmembrane subunits"/>
    <property type="match status" value="1"/>
</dbReference>
<organism>
    <name type="scientific">Escherichia coli O139:H28 (strain E24377A / ETEC)</name>
    <dbReference type="NCBI Taxonomy" id="331111"/>
    <lineage>
        <taxon>Bacteria</taxon>
        <taxon>Pseudomonadati</taxon>
        <taxon>Pseudomonadota</taxon>
        <taxon>Gammaproteobacteria</taxon>
        <taxon>Enterobacterales</taxon>
        <taxon>Enterobacteriaceae</taxon>
        <taxon>Escherichia</taxon>
    </lineage>
</organism>
<name>FRDD_ECO24</name>
<feature type="chain" id="PRO_1000062068" description="Fumarate reductase subunit D">
    <location>
        <begin position="1"/>
        <end position="119"/>
    </location>
</feature>
<feature type="transmembrane region" description="Helical" evidence="1">
    <location>
        <begin position="26"/>
        <end position="46"/>
    </location>
</feature>
<feature type="transmembrane region" description="Helical" evidence="1">
    <location>
        <begin position="55"/>
        <end position="75"/>
    </location>
</feature>
<feature type="transmembrane region" description="Helical" evidence="1">
    <location>
        <begin position="99"/>
        <end position="119"/>
    </location>
</feature>
<keyword id="KW-0997">Cell inner membrane</keyword>
<keyword id="KW-1003">Cell membrane</keyword>
<keyword id="KW-0472">Membrane</keyword>
<keyword id="KW-1185">Reference proteome</keyword>
<keyword id="KW-0812">Transmembrane</keyword>
<keyword id="KW-1133">Transmembrane helix</keyword>
<sequence length="119" mass="13121">MINPNPKRSDEPVFWGLFGAGGMWSAIIAPVMILLVGILLPLGLFPGDALSYERVLAFAQSFIGRVFLFLMIVLPLWCGLHRMHHAMHDLKIHVPAGKWVFYGLAAILTVVTLIGIVTI</sequence>
<comment type="function">
    <text evidence="1">Two distinct, membrane-bound, FAD-containing enzymes are responsible for the catalysis of fumarate and succinate interconversion; fumarate reductase is used in anaerobic growth, and succinate dehydrogenase is used in aerobic growth. Anchors the catalytic components of the fumarate reductase complex to the cell inner membrane, binds quinones.</text>
</comment>
<comment type="subunit">
    <text evidence="1">Part of an enzyme complex containing four subunits: a flavoprotein (FrdA), an iron-sulfur protein (FrdB), and two hydrophobic anchor proteins (FrdC and FrdD).</text>
</comment>
<comment type="subcellular location">
    <subcellularLocation>
        <location evidence="1">Cell inner membrane</location>
        <topology evidence="1">Multi-pass membrane protein</topology>
    </subcellularLocation>
</comment>
<comment type="similarity">
    <text evidence="1">Belongs to the FrdD family.</text>
</comment>